<keyword id="KW-0028">Amino-acid biosynthesis</keyword>
<keyword id="KW-0057">Aromatic amino acid biosynthesis</keyword>
<keyword id="KW-0456">Lyase</keyword>
<keyword id="KW-0822">Tryptophan biosynthesis</keyword>
<feature type="chain" id="PRO_1000018228" description="Tryptophan synthase alpha chain">
    <location>
        <begin position="1"/>
        <end position="259"/>
    </location>
</feature>
<feature type="active site" description="Proton acceptor" evidence="1">
    <location>
        <position position="35"/>
    </location>
</feature>
<feature type="active site" description="Proton acceptor" evidence="1">
    <location>
        <position position="46"/>
    </location>
</feature>
<name>TRPA_METM5</name>
<accession>A4FXH7</accession>
<evidence type="ECO:0000255" key="1">
    <source>
        <dbReference type="HAMAP-Rule" id="MF_00131"/>
    </source>
</evidence>
<gene>
    <name evidence="1" type="primary">trpA</name>
    <name type="ordered locus">MmarC5_0592</name>
</gene>
<protein>
    <recommendedName>
        <fullName evidence="1">Tryptophan synthase alpha chain</fullName>
        <ecNumber evidence="1">4.2.1.20</ecNumber>
    </recommendedName>
</protein>
<proteinExistence type="inferred from homology"/>
<organism>
    <name type="scientific">Methanococcus maripaludis (strain C5 / ATCC BAA-1333)</name>
    <dbReference type="NCBI Taxonomy" id="402880"/>
    <lineage>
        <taxon>Archaea</taxon>
        <taxon>Methanobacteriati</taxon>
        <taxon>Methanobacteriota</taxon>
        <taxon>Methanomada group</taxon>
        <taxon>Methanococci</taxon>
        <taxon>Methanococcales</taxon>
        <taxon>Methanococcaceae</taxon>
        <taxon>Methanococcus</taxon>
    </lineage>
</organism>
<sequence>MNKPVLVSFLVSGDPNPDATLKFMKTLDKYSGVIELGIPFSDPVADGPTIQAADVRALSNGFKIAKSFEVLKEFRKESDTPVILMTYYNPVFKRGIENFVISAKEAGAKGLIIVDLPLQEATEYREICKKHEMGTVFLAAPNTPEERLKISDEASTEFLYLISTFGITGARDTFEQMTFDFIKRARTTCKGKICVGFGISKGSHAESLIEQGADGVIVGSAFVDIIKNYGDSEEALVKLEEFAKELSEGIDKGYEKRNK</sequence>
<reference key="1">
    <citation type="submission" date="2007-03" db="EMBL/GenBank/DDBJ databases">
        <title>Complete sequence of chromosome of Methanococcus maripaludis C5.</title>
        <authorList>
            <consortium name="US DOE Joint Genome Institute"/>
            <person name="Copeland A."/>
            <person name="Lucas S."/>
            <person name="Lapidus A."/>
            <person name="Barry K."/>
            <person name="Glavina del Rio T."/>
            <person name="Dalin E."/>
            <person name="Tice H."/>
            <person name="Pitluck S."/>
            <person name="Chertkov O."/>
            <person name="Brettin T."/>
            <person name="Bruce D."/>
            <person name="Han C."/>
            <person name="Detter J.C."/>
            <person name="Schmutz J."/>
            <person name="Larimer F."/>
            <person name="Land M."/>
            <person name="Hauser L."/>
            <person name="Kyrpides N."/>
            <person name="Mikhailova N."/>
            <person name="Sieprawska-Lupa M."/>
            <person name="Whitman W.B."/>
            <person name="Richardson P."/>
        </authorList>
    </citation>
    <scope>NUCLEOTIDE SEQUENCE [LARGE SCALE GENOMIC DNA]</scope>
    <source>
        <strain>C5 / ATCC BAA-1333</strain>
    </source>
</reference>
<comment type="function">
    <text evidence="1">The alpha subunit is responsible for the aldol cleavage of indoleglycerol phosphate to indole and glyceraldehyde 3-phosphate.</text>
</comment>
<comment type="catalytic activity">
    <reaction evidence="1">
        <text>(1S,2R)-1-C-(indol-3-yl)glycerol 3-phosphate + L-serine = D-glyceraldehyde 3-phosphate + L-tryptophan + H2O</text>
        <dbReference type="Rhea" id="RHEA:10532"/>
        <dbReference type="ChEBI" id="CHEBI:15377"/>
        <dbReference type="ChEBI" id="CHEBI:33384"/>
        <dbReference type="ChEBI" id="CHEBI:57912"/>
        <dbReference type="ChEBI" id="CHEBI:58866"/>
        <dbReference type="ChEBI" id="CHEBI:59776"/>
        <dbReference type="EC" id="4.2.1.20"/>
    </reaction>
</comment>
<comment type="pathway">
    <text evidence="1">Amino-acid biosynthesis; L-tryptophan biosynthesis; L-tryptophan from chorismate: step 5/5.</text>
</comment>
<comment type="subunit">
    <text evidence="1">Tetramer of two alpha and two beta chains.</text>
</comment>
<comment type="similarity">
    <text evidence="1">Belongs to the TrpA family.</text>
</comment>
<dbReference type="EC" id="4.2.1.20" evidence="1"/>
<dbReference type="EMBL" id="CP000609">
    <property type="protein sequence ID" value="ABO34906.1"/>
    <property type="molecule type" value="Genomic_DNA"/>
</dbReference>
<dbReference type="RefSeq" id="WP_011868360.1">
    <property type="nucleotide sequence ID" value="NC_009135.1"/>
</dbReference>
<dbReference type="SMR" id="A4FXH7"/>
<dbReference type="STRING" id="402880.MmarC5_0592"/>
<dbReference type="GeneID" id="4929309"/>
<dbReference type="KEGG" id="mmq:MmarC5_0592"/>
<dbReference type="eggNOG" id="arCOG01086">
    <property type="taxonomic scope" value="Archaea"/>
</dbReference>
<dbReference type="HOGENOM" id="CLU_016734_0_2_2"/>
<dbReference type="OrthoDB" id="25658at2157"/>
<dbReference type="UniPathway" id="UPA00035">
    <property type="reaction ID" value="UER00044"/>
</dbReference>
<dbReference type="Proteomes" id="UP000000253">
    <property type="component" value="Chromosome"/>
</dbReference>
<dbReference type="GO" id="GO:0005829">
    <property type="term" value="C:cytosol"/>
    <property type="evidence" value="ECO:0007669"/>
    <property type="project" value="TreeGrafter"/>
</dbReference>
<dbReference type="GO" id="GO:0004834">
    <property type="term" value="F:tryptophan synthase activity"/>
    <property type="evidence" value="ECO:0007669"/>
    <property type="project" value="UniProtKB-UniRule"/>
</dbReference>
<dbReference type="CDD" id="cd04724">
    <property type="entry name" value="Tryptophan_synthase_alpha"/>
    <property type="match status" value="1"/>
</dbReference>
<dbReference type="FunFam" id="3.20.20.70:FF:000037">
    <property type="entry name" value="Tryptophan synthase alpha chain"/>
    <property type="match status" value="1"/>
</dbReference>
<dbReference type="Gene3D" id="3.20.20.70">
    <property type="entry name" value="Aldolase class I"/>
    <property type="match status" value="1"/>
</dbReference>
<dbReference type="HAMAP" id="MF_00131">
    <property type="entry name" value="Trp_synth_alpha"/>
    <property type="match status" value="1"/>
</dbReference>
<dbReference type="InterPro" id="IPR013785">
    <property type="entry name" value="Aldolase_TIM"/>
</dbReference>
<dbReference type="InterPro" id="IPR011060">
    <property type="entry name" value="RibuloseP-bd_barrel"/>
</dbReference>
<dbReference type="InterPro" id="IPR018204">
    <property type="entry name" value="Trp_synthase_alpha_AS"/>
</dbReference>
<dbReference type="InterPro" id="IPR002028">
    <property type="entry name" value="Trp_synthase_suA"/>
</dbReference>
<dbReference type="NCBIfam" id="TIGR00262">
    <property type="entry name" value="trpA"/>
    <property type="match status" value="1"/>
</dbReference>
<dbReference type="PANTHER" id="PTHR43406:SF1">
    <property type="entry name" value="TRYPTOPHAN SYNTHASE ALPHA CHAIN, CHLOROPLASTIC"/>
    <property type="match status" value="1"/>
</dbReference>
<dbReference type="PANTHER" id="PTHR43406">
    <property type="entry name" value="TRYPTOPHAN SYNTHASE, ALPHA CHAIN"/>
    <property type="match status" value="1"/>
</dbReference>
<dbReference type="Pfam" id="PF00290">
    <property type="entry name" value="Trp_syntA"/>
    <property type="match status" value="1"/>
</dbReference>
<dbReference type="SUPFAM" id="SSF51366">
    <property type="entry name" value="Ribulose-phoshate binding barrel"/>
    <property type="match status" value="1"/>
</dbReference>
<dbReference type="PROSITE" id="PS00167">
    <property type="entry name" value="TRP_SYNTHASE_ALPHA"/>
    <property type="match status" value="1"/>
</dbReference>